<sequence length="66" mass="7697">MPKMKTHRGAAKRVKRTASGQLKRSRAFTSHLFANKSTKQKRQLRKARLVSKSDMKRVKQLLAYKK</sequence>
<protein>
    <recommendedName>
        <fullName evidence="1">Large ribosomal subunit protein bL35</fullName>
    </recommendedName>
    <alternativeName>
        <fullName evidence="3">50S ribosomal protein L35</fullName>
    </alternativeName>
</protein>
<reference key="1">
    <citation type="book" date="2006" name="Gram positive pathogens, 2nd edition">
        <title>The Staphylococcus aureus NCTC 8325 genome.</title>
        <editorList>
            <person name="Fischetti V."/>
            <person name="Novick R."/>
            <person name="Ferretti J."/>
            <person name="Portnoy D."/>
            <person name="Rood J."/>
        </editorList>
        <authorList>
            <person name="Gillaspy A.F."/>
            <person name="Worrell V."/>
            <person name="Orvis J."/>
            <person name="Roe B.A."/>
            <person name="Dyer D.W."/>
            <person name="Iandolo J.J."/>
        </authorList>
    </citation>
    <scope>NUCLEOTIDE SEQUENCE [LARGE SCALE GENOMIC DNA]</scope>
    <source>
        <strain>NCTC 8325 / PS 47</strain>
    </source>
</reference>
<accession>Q2FXQ0</accession>
<name>RL35_STAA8</name>
<organism>
    <name type="scientific">Staphylococcus aureus (strain NCTC 8325 / PS 47)</name>
    <dbReference type="NCBI Taxonomy" id="93061"/>
    <lineage>
        <taxon>Bacteria</taxon>
        <taxon>Bacillati</taxon>
        <taxon>Bacillota</taxon>
        <taxon>Bacilli</taxon>
        <taxon>Bacillales</taxon>
        <taxon>Staphylococcaceae</taxon>
        <taxon>Staphylococcus</taxon>
    </lineage>
</organism>
<evidence type="ECO:0000255" key="1">
    <source>
        <dbReference type="HAMAP-Rule" id="MF_00514"/>
    </source>
</evidence>
<evidence type="ECO:0000256" key="2">
    <source>
        <dbReference type="SAM" id="MobiDB-lite"/>
    </source>
</evidence>
<evidence type="ECO:0000305" key="3"/>
<evidence type="ECO:0007829" key="4">
    <source>
        <dbReference type="PDB" id="6WRS"/>
    </source>
</evidence>
<evidence type="ECO:0007829" key="5">
    <source>
        <dbReference type="PDB" id="7ASM"/>
    </source>
</evidence>
<feature type="chain" id="PRO_0000258759" description="Large ribosomal subunit protein bL35">
    <location>
        <begin position="1"/>
        <end position="66"/>
    </location>
</feature>
<feature type="region of interest" description="Disordered" evidence="2">
    <location>
        <begin position="1"/>
        <end position="49"/>
    </location>
</feature>
<feature type="compositionally biased region" description="Basic residues" evidence="2">
    <location>
        <begin position="1"/>
        <end position="16"/>
    </location>
</feature>
<feature type="compositionally biased region" description="Basic residues" evidence="2">
    <location>
        <begin position="38"/>
        <end position="49"/>
    </location>
</feature>
<feature type="helix" evidence="5">
    <location>
        <begin position="8"/>
        <end position="11"/>
    </location>
</feature>
<feature type="strand" evidence="5">
    <location>
        <begin position="14"/>
        <end position="16"/>
    </location>
</feature>
<feature type="strand" evidence="5">
    <location>
        <begin position="18"/>
        <end position="20"/>
    </location>
</feature>
<feature type="strand" evidence="5">
    <location>
        <begin position="22"/>
        <end position="24"/>
    </location>
</feature>
<feature type="helix" evidence="5">
    <location>
        <begin position="33"/>
        <end position="35"/>
    </location>
</feature>
<feature type="helix" evidence="5">
    <location>
        <begin position="38"/>
        <end position="43"/>
    </location>
</feature>
<feature type="strand" evidence="4">
    <location>
        <begin position="44"/>
        <end position="46"/>
    </location>
</feature>
<feature type="helix" evidence="5">
    <location>
        <begin position="52"/>
        <end position="57"/>
    </location>
</feature>
<feature type="helix" evidence="5">
    <location>
        <begin position="60"/>
        <end position="62"/>
    </location>
</feature>
<comment type="similarity">
    <text evidence="1">Belongs to the bacterial ribosomal protein bL35 family.</text>
</comment>
<gene>
    <name evidence="1" type="primary">rpmI</name>
    <name type="ordered locus">SAOUHSC_01785</name>
</gene>
<keyword id="KW-0002">3D-structure</keyword>
<keyword id="KW-1185">Reference proteome</keyword>
<keyword id="KW-0687">Ribonucleoprotein</keyword>
<keyword id="KW-0689">Ribosomal protein</keyword>
<dbReference type="EMBL" id="CP000253">
    <property type="protein sequence ID" value="ABD30854.1"/>
    <property type="molecule type" value="Genomic_DNA"/>
</dbReference>
<dbReference type="RefSeq" id="WP_001125540.1">
    <property type="nucleotide sequence ID" value="NZ_LS483365.1"/>
</dbReference>
<dbReference type="RefSeq" id="YP_500290.1">
    <property type="nucleotide sequence ID" value="NC_007795.1"/>
</dbReference>
<dbReference type="PDB" id="4WCE">
    <property type="method" value="X-ray"/>
    <property type="resolution" value="3.53 A"/>
    <property type="chains" value="3=1-66"/>
</dbReference>
<dbReference type="PDB" id="4WF9">
    <property type="method" value="X-ray"/>
    <property type="resolution" value="3.43 A"/>
    <property type="chains" value="3=1-66"/>
</dbReference>
<dbReference type="PDB" id="4WFA">
    <property type="method" value="X-ray"/>
    <property type="resolution" value="3.39 A"/>
    <property type="chains" value="3=1-66"/>
</dbReference>
<dbReference type="PDB" id="4WFB">
    <property type="method" value="X-ray"/>
    <property type="resolution" value="3.43 A"/>
    <property type="chains" value="3=1-66"/>
</dbReference>
<dbReference type="PDB" id="5HKV">
    <property type="method" value="X-ray"/>
    <property type="resolution" value="3.66 A"/>
    <property type="chains" value="3=1-66"/>
</dbReference>
<dbReference type="PDB" id="5HL7">
    <property type="method" value="X-ray"/>
    <property type="resolution" value="3.55 A"/>
    <property type="chains" value="3=1-66"/>
</dbReference>
<dbReference type="PDB" id="5LI0">
    <property type="method" value="EM"/>
    <property type="resolution" value="3.80 A"/>
    <property type="chains" value="7=2-61"/>
</dbReference>
<dbReference type="PDB" id="5ND8">
    <property type="method" value="EM"/>
    <property type="resolution" value="3.70 A"/>
    <property type="chains" value="7=1-66"/>
</dbReference>
<dbReference type="PDB" id="5ND9">
    <property type="method" value="EM"/>
    <property type="resolution" value="3.70 A"/>
    <property type="chains" value="7=1-66"/>
</dbReference>
<dbReference type="PDB" id="5NRG">
    <property type="method" value="X-ray"/>
    <property type="resolution" value="3.44 A"/>
    <property type="chains" value="3=1-66"/>
</dbReference>
<dbReference type="PDB" id="5TCU">
    <property type="method" value="EM"/>
    <property type="resolution" value="3.90 A"/>
    <property type="chains" value="LH=2-61"/>
</dbReference>
<dbReference type="PDB" id="6DDD">
    <property type="method" value="EM"/>
    <property type="resolution" value="3.10 A"/>
    <property type="chains" value="Q=1-65"/>
</dbReference>
<dbReference type="PDB" id="6DDG">
    <property type="method" value="EM"/>
    <property type="resolution" value="3.10 A"/>
    <property type="chains" value="Q=1-65"/>
</dbReference>
<dbReference type="PDB" id="6HMA">
    <property type="method" value="EM"/>
    <property type="resolution" value="2.65 A"/>
    <property type="chains" value="3=2-65"/>
</dbReference>
<dbReference type="PDB" id="6SJ6">
    <property type="method" value="EM"/>
    <property type="resolution" value="3.23 A"/>
    <property type="chains" value="7=1-66"/>
</dbReference>
<dbReference type="PDB" id="6WQN">
    <property type="method" value="EM"/>
    <property type="resolution" value="2.90 A"/>
    <property type="chains" value="Q=1-65"/>
</dbReference>
<dbReference type="PDB" id="6WQQ">
    <property type="method" value="EM"/>
    <property type="resolution" value="3.10 A"/>
    <property type="chains" value="Q=1-65"/>
</dbReference>
<dbReference type="PDB" id="6WRS">
    <property type="method" value="EM"/>
    <property type="resolution" value="3.20 A"/>
    <property type="chains" value="Q=1-65"/>
</dbReference>
<dbReference type="PDB" id="6WRU">
    <property type="method" value="EM"/>
    <property type="resolution" value="3.10 A"/>
    <property type="chains" value="Q=1-65"/>
</dbReference>
<dbReference type="PDB" id="6YEF">
    <property type="method" value="EM"/>
    <property type="resolution" value="3.20 A"/>
    <property type="chains" value="7=1-66"/>
</dbReference>
<dbReference type="PDB" id="7ASM">
    <property type="method" value="EM"/>
    <property type="resolution" value="2.48 A"/>
    <property type="chains" value="3=2-65"/>
</dbReference>
<dbReference type="PDB" id="7ASN">
    <property type="method" value="EM"/>
    <property type="resolution" value="2.73 A"/>
    <property type="chains" value="3=2-65"/>
</dbReference>
<dbReference type="PDB" id="7NHL">
    <property type="method" value="EM"/>
    <property type="resolution" value="3.10 A"/>
    <property type="chains" value="8=1-66"/>
</dbReference>
<dbReference type="PDB" id="7NHM">
    <property type="method" value="EM"/>
    <property type="resolution" value="3.10 A"/>
    <property type="chains" value="8=1-66"/>
</dbReference>
<dbReference type="PDB" id="7TTU">
    <property type="method" value="EM"/>
    <property type="resolution" value="3.00 A"/>
    <property type="chains" value="Q=1-65"/>
</dbReference>
<dbReference type="PDB" id="7TTW">
    <property type="method" value="EM"/>
    <property type="resolution" value="2.90 A"/>
    <property type="chains" value="Q=1-65"/>
</dbReference>
<dbReference type="PDB" id="8P2F">
    <property type="method" value="EM"/>
    <property type="resolution" value="2.44 A"/>
    <property type="chains" value="8=1-66"/>
</dbReference>
<dbReference type="PDB" id="8P2G">
    <property type="method" value="EM"/>
    <property type="resolution" value="2.02 A"/>
    <property type="chains" value="8=1-66"/>
</dbReference>
<dbReference type="PDB" id="8P2H">
    <property type="method" value="EM"/>
    <property type="resolution" value="2.49 A"/>
    <property type="chains" value="8=1-66"/>
</dbReference>
<dbReference type="PDBsum" id="4WCE"/>
<dbReference type="PDBsum" id="4WF9"/>
<dbReference type="PDBsum" id="4WFA"/>
<dbReference type="PDBsum" id="4WFB"/>
<dbReference type="PDBsum" id="5HKV"/>
<dbReference type="PDBsum" id="5HL7"/>
<dbReference type="PDBsum" id="5LI0"/>
<dbReference type="PDBsum" id="5ND8"/>
<dbReference type="PDBsum" id="5ND9"/>
<dbReference type="PDBsum" id="5NRG"/>
<dbReference type="PDBsum" id="5TCU"/>
<dbReference type="PDBsum" id="6DDD"/>
<dbReference type="PDBsum" id="6DDG"/>
<dbReference type="PDBsum" id="6HMA"/>
<dbReference type="PDBsum" id="6SJ6"/>
<dbReference type="PDBsum" id="6WQN"/>
<dbReference type="PDBsum" id="6WQQ"/>
<dbReference type="PDBsum" id="6WRS"/>
<dbReference type="PDBsum" id="6WRU"/>
<dbReference type="PDBsum" id="6YEF"/>
<dbReference type="PDBsum" id="7ASM"/>
<dbReference type="PDBsum" id="7ASN"/>
<dbReference type="PDBsum" id="7NHL"/>
<dbReference type="PDBsum" id="7NHM"/>
<dbReference type="PDBsum" id="7TTU"/>
<dbReference type="PDBsum" id="7TTW"/>
<dbReference type="PDBsum" id="8P2F"/>
<dbReference type="PDBsum" id="8P2G"/>
<dbReference type="PDBsum" id="8P2H"/>
<dbReference type="EMDB" id="EMD-10212"/>
<dbReference type="EMDB" id="EMD-10791"/>
<dbReference type="EMDB" id="EMD-12332"/>
<dbReference type="EMDB" id="EMD-12333"/>
<dbReference type="EMDB" id="EMD-17363"/>
<dbReference type="EMDB" id="EMD-17364"/>
<dbReference type="EMDB" id="EMD-17365"/>
<dbReference type="EMDB" id="EMD-3624"/>
<dbReference type="EMDB" id="EMD-3625"/>
<dbReference type="EMDB" id="EMD-4050"/>
<dbReference type="EMDB" id="EMD-8402"/>
<dbReference type="SMR" id="Q2FXQ0"/>
<dbReference type="IntAct" id="Q2FXQ0">
    <property type="interactions" value="1"/>
</dbReference>
<dbReference type="STRING" id="93061.SAOUHSC_01785"/>
<dbReference type="PaxDb" id="1280-SAXN108_1706"/>
<dbReference type="GeneID" id="3920427"/>
<dbReference type="GeneID" id="98346041"/>
<dbReference type="KEGG" id="sao:SAOUHSC_01785"/>
<dbReference type="PATRIC" id="fig|93061.5.peg.1627"/>
<dbReference type="eggNOG" id="COG0291">
    <property type="taxonomic scope" value="Bacteria"/>
</dbReference>
<dbReference type="HOGENOM" id="CLU_169643_3_0_9"/>
<dbReference type="OrthoDB" id="47476at2"/>
<dbReference type="EvolutionaryTrace" id="Q2FXQ0"/>
<dbReference type="PRO" id="PR:Q2FXQ0"/>
<dbReference type="Proteomes" id="UP000008816">
    <property type="component" value="Chromosome"/>
</dbReference>
<dbReference type="GO" id="GO:0022625">
    <property type="term" value="C:cytosolic large ribosomal subunit"/>
    <property type="evidence" value="ECO:0000318"/>
    <property type="project" value="GO_Central"/>
</dbReference>
<dbReference type="GO" id="GO:0003735">
    <property type="term" value="F:structural constituent of ribosome"/>
    <property type="evidence" value="ECO:0000318"/>
    <property type="project" value="GO_Central"/>
</dbReference>
<dbReference type="GO" id="GO:0006412">
    <property type="term" value="P:translation"/>
    <property type="evidence" value="ECO:0007669"/>
    <property type="project" value="UniProtKB-UniRule"/>
</dbReference>
<dbReference type="FunFam" id="4.10.410.60:FF:000001">
    <property type="entry name" value="50S ribosomal protein L35"/>
    <property type="match status" value="1"/>
</dbReference>
<dbReference type="Gene3D" id="4.10.410.60">
    <property type="match status" value="1"/>
</dbReference>
<dbReference type="HAMAP" id="MF_00514">
    <property type="entry name" value="Ribosomal_bL35"/>
    <property type="match status" value="1"/>
</dbReference>
<dbReference type="InterPro" id="IPR001706">
    <property type="entry name" value="Ribosomal_bL35"/>
</dbReference>
<dbReference type="InterPro" id="IPR021137">
    <property type="entry name" value="Ribosomal_bL35-like"/>
</dbReference>
<dbReference type="InterPro" id="IPR018265">
    <property type="entry name" value="Ribosomal_bL35_CS"/>
</dbReference>
<dbReference type="InterPro" id="IPR037229">
    <property type="entry name" value="Ribosomal_bL35_sf"/>
</dbReference>
<dbReference type="NCBIfam" id="TIGR00001">
    <property type="entry name" value="rpmI_bact"/>
    <property type="match status" value="1"/>
</dbReference>
<dbReference type="PANTHER" id="PTHR33343">
    <property type="entry name" value="54S RIBOSOMAL PROTEIN BL35M"/>
    <property type="match status" value="1"/>
</dbReference>
<dbReference type="PANTHER" id="PTHR33343:SF1">
    <property type="entry name" value="LARGE RIBOSOMAL SUBUNIT PROTEIN BL35M"/>
    <property type="match status" value="1"/>
</dbReference>
<dbReference type="Pfam" id="PF01632">
    <property type="entry name" value="Ribosomal_L35p"/>
    <property type="match status" value="1"/>
</dbReference>
<dbReference type="PRINTS" id="PR00064">
    <property type="entry name" value="RIBOSOMALL35"/>
</dbReference>
<dbReference type="SUPFAM" id="SSF143034">
    <property type="entry name" value="L35p-like"/>
    <property type="match status" value="1"/>
</dbReference>
<dbReference type="PROSITE" id="PS00936">
    <property type="entry name" value="RIBOSOMAL_L35"/>
    <property type="match status" value="1"/>
</dbReference>
<proteinExistence type="evidence at protein level"/>